<name>NDK_PSYCK</name>
<sequence length="143" mass="15508">MANERTLSIIKPDAVAGNNIGAIYDRFEKSGLKIVAAKMMQLDDKKAGGFYAEHAERPFYNDLVSFMTSGPVLVSVLEGENAIATHRDIMGATNPKDAAEGTIRADFASSIDENAVHGSDSAESAAREISYFFNEEEVCARTR</sequence>
<reference key="1">
    <citation type="submission" date="2006-03" db="EMBL/GenBank/DDBJ databases">
        <title>Complete sequence of chromosome of Psychrobacter cryohalolentis K5.</title>
        <authorList>
            <consortium name="US DOE Joint Genome Institute"/>
            <person name="Copeland A."/>
            <person name="Lucas S."/>
            <person name="Lapidus A."/>
            <person name="Barry K."/>
            <person name="Detter J.C."/>
            <person name="Glavina T."/>
            <person name="Hammon N."/>
            <person name="Israni S."/>
            <person name="Dalin E."/>
            <person name="Tice H."/>
            <person name="Pitluck S."/>
            <person name="Brettin T."/>
            <person name="Bruce D."/>
            <person name="Han C."/>
            <person name="Tapia R."/>
            <person name="Sims D.R."/>
            <person name="Gilna P."/>
            <person name="Schmutz J."/>
            <person name="Larimer F."/>
            <person name="Land M."/>
            <person name="Hauser L."/>
            <person name="Kyrpides N."/>
            <person name="Kim E."/>
            <person name="Richardson P."/>
        </authorList>
    </citation>
    <scope>NUCLEOTIDE SEQUENCE [LARGE SCALE GENOMIC DNA]</scope>
    <source>
        <strain>ATCC BAA-1226 / DSM 17306 / VKM B-2378 / K5</strain>
    </source>
</reference>
<feature type="chain" id="PRO_0000242508" description="Nucleoside diphosphate kinase">
    <location>
        <begin position="1"/>
        <end position="143"/>
    </location>
</feature>
<feature type="active site" description="Pros-phosphohistidine intermediate" evidence="1">
    <location>
        <position position="117"/>
    </location>
</feature>
<feature type="binding site" evidence="1">
    <location>
        <position position="11"/>
    </location>
    <ligand>
        <name>ATP</name>
        <dbReference type="ChEBI" id="CHEBI:30616"/>
    </ligand>
</feature>
<feature type="binding site" evidence="1">
    <location>
        <position position="59"/>
    </location>
    <ligand>
        <name>ATP</name>
        <dbReference type="ChEBI" id="CHEBI:30616"/>
    </ligand>
</feature>
<feature type="binding site" evidence="1">
    <location>
        <position position="87"/>
    </location>
    <ligand>
        <name>ATP</name>
        <dbReference type="ChEBI" id="CHEBI:30616"/>
    </ligand>
</feature>
<feature type="binding site" evidence="1">
    <location>
        <position position="93"/>
    </location>
    <ligand>
        <name>ATP</name>
        <dbReference type="ChEBI" id="CHEBI:30616"/>
    </ligand>
</feature>
<feature type="binding site" evidence="1">
    <location>
        <position position="104"/>
    </location>
    <ligand>
        <name>ATP</name>
        <dbReference type="ChEBI" id="CHEBI:30616"/>
    </ligand>
</feature>
<feature type="binding site" evidence="1">
    <location>
        <position position="114"/>
    </location>
    <ligand>
        <name>ATP</name>
        <dbReference type="ChEBI" id="CHEBI:30616"/>
    </ligand>
</feature>
<comment type="function">
    <text evidence="1">Major role in the synthesis of nucleoside triphosphates other than ATP. The ATP gamma phosphate is transferred to the NDP beta phosphate via a ping-pong mechanism, using a phosphorylated active-site intermediate.</text>
</comment>
<comment type="catalytic activity">
    <reaction evidence="1">
        <text>a 2'-deoxyribonucleoside 5'-diphosphate + ATP = a 2'-deoxyribonucleoside 5'-triphosphate + ADP</text>
        <dbReference type="Rhea" id="RHEA:44640"/>
        <dbReference type="ChEBI" id="CHEBI:30616"/>
        <dbReference type="ChEBI" id="CHEBI:61560"/>
        <dbReference type="ChEBI" id="CHEBI:73316"/>
        <dbReference type="ChEBI" id="CHEBI:456216"/>
        <dbReference type="EC" id="2.7.4.6"/>
    </reaction>
</comment>
<comment type="catalytic activity">
    <reaction evidence="1">
        <text>a ribonucleoside 5'-diphosphate + ATP = a ribonucleoside 5'-triphosphate + ADP</text>
        <dbReference type="Rhea" id="RHEA:18113"/>
        <dbReference type="ChEBI" id="CHEBI:30616"/>
        <dbReference type="ChEBI" id="CHEBI:57930"/>
        <dbReference type="ChEBI" id="CHEBI:61557"/>
        <dbReference type="ChEBI" id="CHEBI:456216"/>
        <dbReference type="EC" id="2.7.4.6"/>
    </reaction>
</comment>
<comment type="cofactor">
    <cofactor evidence="1">
        <name>Mg(2+)</name>
        <dbReference type="ChEBI" id="CHEBI:18420"/>
    </cofactor>
</comment>
<comment type="subunit">
    <text evidence="1">Homotetramer.</text>
</comment>
<comment type="subcellular location">
    <subcellularLocation>
        <location evidence="1">Cytoplasm</location>
    </subcellularLocation>
</comment>
<comment type="similarity">
    <text evidence="1">Belongs to the NDK family.</text>
</comment>
<accession>Q1QD23</accession>
<evidence type="ECO:0000255" key="1">
    <source>
        <dbReference type="HAMAP-Rule" id="MF_00451"/>
    </source>
</evidence>
<dbReference type="EC" id="2.7.4.6" evidence="1"/>
<dbReference type="EMBL" id="CP000323">
    <property type="protein sequence ID" value="ABE74430.1"/>
    <property type="molecule type" value="Genomic_DNA"/>
</dbReference>
<dbReference type="RefSeq" id="WP_011512998.1">
    <property type="nucleotide sequence ID" value="NC_007969.1"/>
</dbReference>
<dbReference type="SMR" id="Q1QD23"/>
<dbReference type="STRING" id="335284.Pcryo_0647"/>
<dbReference type="KEGG" id="pcr:Pcryo_0647"/>
<dbReference type="eggNOG" id="COG0105">
    <property type="taxonomic scope" value="Bacteria"/>
</dbReference>
<dbReference type="HOGENOM" id="CLU_060216_8_1_6"/>
<dbReference type="Proteomes" id="UP000002425">
    <property type="component" value="Chromosome"/>
</dbReference>
<dbReference type="GO" id="GO:0005737">
    <property type="term" value="C:cytoplasm"/>
    <property type="evidence" value="ECO:0007669"/>
    <property type="project" value="UniProtKB-SubCell"/>
</dbReference>
<dbReference type="GO" id="GO:0005524">
    <property type="term" value="F:ATP binding"/>
    <property type="evidence" value="ECO:0007669"/>
    <property type="project" value="UniProtKB-UniRule"/>
</dbReference>
<dbReference type="GO" id="GO:0046872">
    <property type="term" value="F:metal ion binding"/>
    <property type="evidence" value="ECO:0007669"/>
    <property type="project" value="UniProtKB-KW"/>
</dbReference>
<dbReference type="GO" id="GO:0004550">
    <property type="term" value="F:nucleoside diphosphate kinase activity"/>
    <property type="evidence" value="ECO:0007669"/>
    <property type="project" value="UniProtKB-UniRule"/>
</dbReference>
<dbReference type="GO" id="GO:0006241">
    <property type="term" value="P:CTP biosynthetic process"/>
    <property type="evidence" value="ECO:0007669"/>
    <property type="project" value="UniProtKB-UniRule"/>
</dbReference>
<dbReference type="GO" id="GO:0006183">
    <property type="term" value="P:GTP biosynthetic process"/>
    <property type="evidence" value="ECO:0007669"/>
    <property type="project" value="UniProtKB-UniRule"/>
</dbReference>
<dbReference type="GO" id="GO:0006228">
    <property type="term" value="P:UTP biosynthetic process"/>
    <property type="evidence" value="ECO:0007669"/>
    <property type="project" value="UniProtKB-UniRule"/>
</dbReference>
<dbReference type="CDD" id="cd04413">
    <property type="entry name" value="NDPk_I"/>
    <property type="match status" value="1"/>
</dbReference>
<dbReference type="FunFam" id="3.30.70.141:FF:000001">
    <property type="entry name" value="Nucleoside diphosphate kinase"/>
    <property type="match status" value="1"/>
</dbReference>
<dbReference type="Gene3D" id="3.30.70.141">
    <property type="entry name" value="Nucleoside diphosphate kinase-like domain"/>
    <property type="match status" value="1"/>
</dbReference>
<dbReference type="HAMAP" id="MF_00451">
    <property type="entry name" value="NDP_kinase"/>
    <property type="match status" value="1"/>
</dbReference>
<dbReference type="InterPro" id="IPR034907">
    <property type="entry name" value="NDK-like_dom"/>
</dbReference>
<dbReference type="InterPro" id="IPR036850">
    <property type="entry name" value="NDK-like_dom_sf"/>
</dbReference>
<dbReference type="InterPro" id="IPR001564">
    <property type="entry name" value="Nucleoside_diP_kinase"/>
</dbReference>
<dbReference type="NCBIfam" id="NF001908">
    <property type="entry name" value="PRK00668.1"/>
    <property type="match status" value="1"/>
</dbReference>
<dbReference type="PANTHER" id="PTHR46161">
    <property type="entry name" value="NUCLEOSIDE DIPHOSPHATE KINASE"/>
    <property type="match status" value="1"/>
</dbReference>
<dbReference type="PANTHER" id="PTHR46161:SF3">
    <property type="entry name" value="NUCLEOSIDE DIPHOSPHATE KINASE DDB_G0292928-RELATED"/>
    <property type="match status" value="1"/>
</dbReference>
<dbReference type="Pfam" id="PF00334">
    <property type="entry name" value="NDK"/>
    <property type="match status" value="1"/>
</dbReference>
<dbReference type="PRINTS" id="PR01243">
    <property type="entry name" value="NUCDPKINASE"/>
</dbReference>
<dbReference type="SMART" id="SM00562">
    <property type="entry name" value="NDK"/>
    <property type="match status" value="1"/>
</dbReference>
<dbReference type="SUPFAM" id="SSF54919">
    <property type="entry name" value="Nucleoside diphosphate kinase, NDK"/>
    <property type="match status" value="1"/>
</dbReference>
<dbReference type="PROSITE" id="PS51374">
    <property type="entry name" value="NDPK_LIKE"/>
    <property type="match status" value="1"/>
</dbReference>
<keyword id="KW-0067">ATP-binding</keyword>
<keyword id="KW-0963">Cytoplasm</keyword>
<keyword id="KW-0418">Kinase</keyword>
<keyword id="KW-0460">Magnesium</keyword>
<keyword id="KW-0479">Metal-binding</keyword>
<keyword id="KW-0546">Nucleotide metabolism</keyword>
<keyword id="KW-0547">Nucleotide-binding</keyword>
<keyword id="KW-0597">Phosphoprotein</keyword>
<keyword id="KW-0808">Transferase</keyword>
<gene>
    <name evidence="1" type="primary">ndk</name>
    <name type="ordered locus">Pcryo_0647</name>
</gene>
<proteinExistence type="inferred from homology"/>
<protein>
    <recommendedName>
        <fullName evidence="1">Nucleoside diphosphate kinase</fullName>
        <shortName evidence="1">NDK</shortName>
        <shortName evidence="1">NDP kinase</shortName>
        <ecNumber evidence="1">2.7.4.6</ecNumber>
    </recommendedName>
    <alternativeName>
        <fullName evidence="1">Nucleoside-2-P kinase</fullName>
    </alternativeName>
</protein>
<organism>
    <name type="scientific">Psychrobacter cryohalolentis (strain ATCC BAA-1226 / DSM 17306 / VKM B-2378 / K5)</name>
    <dbReference type="NCBI Taxonomy" id="335284"/>
    <lineage>
        <taxon>Bacteria</taxon>
        <taxon>Pseudomonadati</taxon>
        <taxon>Pseudomonadota</taxon>
        <taxon>Gammaproteobacteria</taxon>
        <taxon>Moraxellales</taxon>
        <taxon>Moraxellaceae</taxon>
        <taxon>Psychrobacter</taxon>
    </lineage>
</organism>